<dbReference type="EC" id="5.4.99.25" evidence="1"/>
<dbReference type="EMBL" id="CP001100">
    <property type="protein sequence ID" value="ACF13698.1"/>
    <property type="molecule type" value="Genomic_DNA"/>
</dbReference>
<dbReference type="RefSeq" id="WP_012499782.1">
    <property type="nucleotide sequence ID" value="NC_011026.1"/>
</dbReference>
<dbReference type="SMR" id="B3QZ05"/>
<dbReference type="STRING" id="517418.Ctha_1235"/>
<dbReference type="KEGG" id="cts:Ctha_1235"/>
<dbReference type="eggNOG" id="COG0130">
    <property type="taxonomic scope" value="Bacteria"/>
</dbReference>
<dbReference type="HOGENOM" id="CLU_032087_2_0_10"/>
<dbReference type="OrthoDB" id="9802309at2"/>
<dbReference type="Proteomes" id="UP000001208">
    <property type="component" value="Chromosome"/>
</dbReference>
<dbReference type="GO" id="GO:0003723">
    <property type="term" value="F:RNA binding"/>
    <property type="evidence" value="ECO:0007669"/>
    <property type="project" value="InterPro"/>
</dbReference>
<dbReference type="GO" id="GO:0160148">
    <property type="term" value="F:tRNA pseudouridine(55) synthase activity"/>
    <property type="evidence" value="ECO:0007669"/>
    <property type="project" value="UniProtKB-EC"/>
</dbReference>
<dbReference type="GO" id="GO:1990481">
    <property type="term" value="P:mRNA pseudouridine synthesis"/>
    <property type="evidence" value="ECO:0007669"/>
    <property type="project" value="TreeGrafter"/>
</dbReference>
<dbReference type="GO" id="GO:0031119">
    <property type="term" value="P:tRNA pseudouridine synthesis"/>
    <property type="evidence" value="ECO:0007669"/>
    <property type="project" value="UniProtKB-UniRule"/>
</dbReference>
<dbReference type="Gene3D" id="3.30.2350.10">
    <property type="entry name" value="Pseudouridine synthase"/>
    <property type="match status" value="1"/>
</dbReference>
<dbReference type="HAMAP" id="MF_01080">
    <property type="entry name" value="TruB_bact"/>
    <property type="match status" value="1"/>
</dbReference>
<dbReference type="InterPro" id="IPR020103">
    <property type="entry name" value="PsdUridine_synth_cat_dom_sf"/>
</dbReference>
<dbReference type="InterPro" id="IPR002501">
    <property type="entry name" value="PsdUridine_synth_N"/>
</dbReference>
<dbReference type="InterPro" id="IPR014780">
    <property type="entry name" value="tRNA_psdUridine_synth_TruB"/>
</dbReference>
<dbReference type="InterPro" id="IPR032819">
    <property type="entry name" value="TruB_C"/>
</dbReference>
<dbReference type="NCBIfam" id="TIGR00431">
    <property type="entry name" value="TruB"/>
    <property type="match status" value="1"/>
</dbReference>
<dbReference type="PANTHER" id="PTHR13767:SF2">
    <property type="entry name" value="PSEUDOURIDYLATE SYNTHASE TRUB1"/>
    <property type="match status" value="1"/>
</dbReference>
<dbReference type="PANTHER" id="PTHR13767">
    <property type="entry name" value="TRNA-PSEUDOURIDINE SYNTHASE"/>
    <property type="match status" value="1"/>
</dbReference>
<dbReference type="Pfam" id="PF16198">
    <property type="entry name" value="TruB_C_2"/>
    <property type="match status" value="1"/>
</dbReference>
<dbReference type="Pfam" id="PF01509">
    <property type="entry name" value="TruB_N"/>
    <property type="match status" value="1"/>
</dbReference>
<dbReference type="SUPFAM" id="SSF55120">
    <property type="entry name" value="Pseudouridine synthase"/>
    <property type="match status" value="1"/>
</dbReference>
<reference key="1">
    <citation type="submission" date="2008-06" db="EMBL/GenBank/DDBJ databases">
        <title>Complete sequence of Chloroherpeton thalassium ATCC 35110.</title>
        <authorList>
            <consortium name="US DOE Joint Genome Institute"/>
            <person name="Lucas S."/>
            <person name="Copeland A."/>
            <person name="Lapidus A."/>
            <person name="Glavina del Rio T."/>
            <person name="Dalin E."/>
            <person name="Tice H."/>
            <person name="Bruce D."/>
            <person name="Goodwin L."/>
            <person name="Pitluck S."/>
            <person name="Schmutz J."/>
            <person name="Larimer F."/>
            <person name="Land M."/>
            <person name="Hauser L."/>
            <person name="Kyrpides N."/>
            <person name="Mikhailova N."/>
            <person name="Liu Z."/>
            <person name="Li T."/>
            <person name="Zhao F."/>
            <person name="Overmann J."/>
            <person name="Bryant D.A."/>
            <person name="Richardson P."/>
        </authorList>
    </citation>
    <scope>NUCLEOTIDE SEQUENCE [LARGE SCALE GENOMIC DNA]</scope>
    <source>
        <strain>ATCC 35110 / GB-78</strain>
    </source>
</reference>
<proteinExistence type="inferred from homology"/>
<feature type="chain" id="PRO_1000136811" description="tRNA pseudouridine synthase B">
    <location>
        <begin position="1"/>
        <end position="241"/>
    </location>
</feature>
<feature type="active site" description="Nucleophile" evidence="1">
    <location>
        <position position="52"/>
    </location>
</feature>
<protein>
    <recommendedName>
        <fullName evidence="1">tRNA pseudouridine synthase B</fullName>
        <ecNumber evidence="1">5.4.99.25</ecNumber>
    </recommendedName>
    <alternativeName>
        <fullName evidence="1">tRNA pseudouridine(55) synthase</fullName>
        <shortName evidence="1">Psi55 synthase</shortName>
    </alternativeName>
    <alternativeName>
        <fullName evidence="1">tRNA pseudouridylate synthase</fullName>
    </alternativeName>
    <alternativeName>
        <fullName evidence="1">tRNA-uridine isomerase</fullName>
    </alternativeName>
</protein>
<evidence type="ECO:0000255" key="1">
    <source>
        <dbReference type="HAMAP-Rule" id="MF_01080"/>
    </source>
</evidence>
<name>TRUB_CHLT3</name>
<keyword id="KW-0413">Isomerase</keyword>
<keyword id="KW-1185">Reference proteome</keyword>
<keyword id="KW-0819">tRNA processing</keyword>
<gene>
    <name evidence="1" type="primary">truB</name>
    <name type="ordered locus">Ctha_1235</name>
</gene>
<comment type="function">
    <text evidence="1">Responsible for synthesis of pseudouridine from uracil-55 in the psi GC loop of transfer RNAs.</text>
</comment>
<comment type="catalytic activity">
    <reaction evidence="1">
        <text>uridine(55) in tRNA = pseudouridine(55) in tRNA</text>
        <dbReference type="Rhea" id="RHEA:42532"/>
        <dbReference type="Rhea" id="RHEA-COMP:10101"/>
        <dbReference type="Rhea" id="RHEA-COMP:10102"/>
        <dbReference type="ChEBI" id="CHEBI:65314"/>
        <dbReference type="ChEBI" id="CHEBI:65315"/>
        <dbReference type="EC" id="5.4.99.25"/>
    </reaction>
</comment>
<comment type="similarity">
    <text evidence="1">Belongs to the pseudouridine synthase TruB family. Type 1 subfamily.</text>
</comment>
<accession>B3QZ05</accession>
<organism>
    <name type="scientific">Chloroherpeton thalassium (strain ATCC 35110 / GB-78)</name>
    <dbReference type="NCBI Taxonomy" id="517418"/>
    <lineage>
        <taxon>Bacteria</taxon>
        <taxon>Pseudomonadati</taxon>
        <taxon>Chlorobiota</taxon>
        <taxon>Chlorobiia</taxon>
        <taxon>Chlorobiales</taxon>
        <taxon>Chloroherpetonaceae</taxon>
        <taxon>Chloroherpeton</taxon>
    </lineage>
</organism>
<sequence length="241" mass="27044">MMDRLNCVCPDGEFLLIDKPLGWTSFDVVARIRTSYKKNGLKRKVGHCGTLDPLATGLLMLATGKKTKEISSIEILDKEYTGAIKLGVKTPSYDGETEEFDFCETSHLTSSEIHEAARQFLGKQQQKPPMFSATWHKGKRLYEHARQGKDIPERKSKDVEVFAFDITGIELPIVRFRLQVTKGTYVRSIANDFGERLGVGGYLTELRRTKIGDFSISQAETVSDILEKIVKTAEAHQANLT</sequence>